<feature type="chain" id="PRO_0000143839" description="Uridylate kinase">
    <location>
        <begin position="1"/>
        <end position="239"/>
    </location>
</feature>
<feature type="region of interest" description="Involved in allosteric activation by GTP" evidence="1">
    <location>
        <begin position="18"/>
        <end position="23"/>
    </location>
</feature>
<feature type="binding site" evidence="1">
    <location>
        <begin position="10"/>
        <end position="13"/>
    </location>
    <ligand>
        <name>ATP</name>
        <dbReference type="ChEBI" id="CHEBI:30616"/>
    </ligand>
</feature>
<feature type="binding site" evidence="1">
    <location>
        <position position="52"/>
    </location>
    <ligand>
        <name>UMP</name>
        <dbReference type="ChEBI" id="CHEBI:57865"/>
    </ligand>
</feature>
<feature type="binding site" evidence="1">
    <location>
        <position position="53"/>
    </location>
    <ligand>
        <name>ATP</name>
        <dbReference type="ChEBI" id="CHEBI:30616"/>
    </ligand>
</feature>
<feature type="binding site" evidence="1">
    <location>
        <position position="57"/>
    </location>
    <ligand>
        <name>ATP</name>
        <dbReference type="ChEBI" id="CHEBI:30616"/>
    </ligand>
</feature>
<feature type="binding site" evidence="1">
    <location>
        <position position="72"/>
    </location>
    <ligand>
        <name>UMP</name>
        <dbReference type="ChEBI" id="CHEBI:57865"/>
    </ligand>
</feature>
<feature type="binding site" evidence="1">
    <location>
        <begin position="133"/>
        <end position="140"/>
    </location>
    <ligand>
        <name>UMP</name>
        <dbReference type="ChEBI" id="CHEBI:57865"/>
    </ligand>
</feature>
<feature type="binding site" evidence="1">
    <location>
        <position position="160"/>
    </location>
    <ligand>
        <name>ATP</name>
        <dbReference type="ChEBI" id="CHEBI:30616"/>
    </ligand>
</feature>
<feature type="binding site" evidence="1">
    <location>
        <position position="166"/>
    </location>
    <ligand>
        <name>ATP</name>
        <dbReference type="ChEBI" id="CHEBI:30616"/>
    </ligand>
</feature>
<feature type="binding site" evidence="1">
    <location>
        <position position="169"/>
    </location>
    <ligand>
        <name>ATP</name>
        <dbReference type="ChEBI" id="CHEBI:30616"/>
    </ligand>
</feature>
<keyword id="KW-0021">Allosteric enzyme</keyword>
<keyword id="KW-0067">ATP-binding</keyword>
<keyword id="KW-0963">Cytoplasm</keyword>
<keyword id="KW-0418">Kinase</keyword>
<keyword id="KW-0547">Nucleotide-binding</keyword>
<keyword id="KW-0665">Pyrimidine biosynthesis</keyword>
<keyword id="KW-1185">Reference proteome</keyword>
<keyword id="KW-0808">Transferase</keyword>
<proteinExistence type="inferred from homology"/>
<protein>
    <recommendedName>
        <fullName evidence="1">Uridylate kinase</fullName>
        <shortName evidence="1">UK</shortName>
        <ecNumber evidence="1">2.7.4.22</ecNumber>
    </recommendedName>
    <alternativeName>
        <fullName evidence="1">Uridine monophosphate kinase</fullName>
        <shortName evidence="1">UMP kinase</shortName>
        <shortName evidence="1">UMPK</shortName>
    </alternativeName>
</protein>
<reference key="1">
    <citation type="journal article" date="2002" name="Proc. Natl. Acad. Sci. U.S.A.">
        <title>The complete genome sequence of Chlorobium tepidum TLS, a photosynthetic, anaerobic, green-sulfur bacterium.</title>
        <authorList>
            <person name="Eisen J.A."/>
            <person name="Nelson K.E."/>
            <person name="Paulsen I.T."/>
            <person name="Heidelberg J.F."/>
            <person name="Wu M."/>
            <person name="Dodson R.J."/>
            <person name="DeBoy R.T."/>
            <person name="Gwinn M.L."/>
            <person name="Nelson W.C."/>
            <person name="Haft D.H."/>
            <person name="Hickey E.K."/>
            <person name="Peterson J.D."/>
            <person name="Durkin A.S."/>
            <person name="Kolonay J.F."/>
            <person name="Yang F."/>
            <person name="Holt I.E."/>
            <person name="Umayam L.A."/>
            <person name="Mason T.M."/>
            <person name="Brenner M."/>
            <person name="Shea T.P."/>
            <person name="Parksey D.S."/>
            <person name="Nierman W.C."/>
            <person name="Feldblyum T.V."/>
            <person name="Hansen C.L."/>
            <person name="Craven M.B."/>
            <person name="Radune D."/>
            <person name="Vamathevan J.J."/>
            <person name="Khouri H.M."/>
            <person name="White O."/>
            <person name="Gruber T.M."/>
            <person name="Ketchum K.A."/>
            <person name="Venter J.C."/>
            <person name="Tettelin H."/>
            <person name="Bryant D.A."/>
            <person name="Fraser C.M."/>
        </authorList>
    </citation>
    <scope>NUCLEOTIDE SEQUENCE [LARGE SCALE GENOMIC DNA]</scope>
    <source>
        <strain>ATCC 49652 / DSM 12025 / NBRC 103806 / TLS</strain>
    </source>
</reference>
<evidence type="ECO:0000255" key="1">
    <source>
        <dbReference type="HAMAP-Rule" id="MF_01220"/>
    </source>
</evidence>
<accession>P59003</accession>
<sequence>MRKYRRILLKISGESLAGESGYGIDAGVLESFADDIKEATDLGAEIALVIGGGNIFRGLSAAAASMDRVQADYMGMLATVINSLALQDALERKGIFTRLVTAIKMEQIAEPFIRRRAVRHLEKGRVVIFGAGTGNPYFTTDTAASLRAIEIEADVIVKGTRVEGVYDSDPEKNPNAEFFPKISYVDVIRKNLRVMDMTAITLCRENTLPIVVMNMNIKGNFTRLLKGEPIGTLVHVGEE</sequence>
<organism>
    <name type="scientific">Chlorobaculum tepidum (strain ATCC 49652 / DSM 12025 / NBRC 103806 / TLS)</name>
    <name type="common">Chlorobium tepidum</name>
    <dbReference type="NCBI Taxonomy" id="194439"/>
    <lineage>
        <taxon>Bacteria</taxon>
        <taxon>Pseudomonadati</taxon>
        <taxon>Chlorobiota</taxon>
        <taxon>Chlorobiia</taxon>
        <taxon>Chlorobiales</taxon>
        <taxon>Chlorobiaceae</taxon>
        <taxon>Chlorobaculum</taxon>
    </lineage>
</organism>
<name>PYRH_CHLTE</name>
<gene>
    <name evidence="1" type="primary">pyrH</name>
    <name type="ordered locus">CT1779</name>
</gene>
<comment type="function">
    <text evidence="1">Catalyzes the reversible phosphorylation of UMP to UDP.</text>
</comment>
<comment type="catalytic activity">
    <reaction evidence="1">
        <text>UMP + ATP = UDP + ADP</text>
        <dbReference type="Rhea" id="RHEA:24400"/>
        <dbReference type="ChEBI" id="CHEBI:30616"/>
        <dbReference type="ChEBI" id="CHEBI:57865"/>
        <dbReference type="ChEBI" id="CHEBI:58223"/>
        <dbReference type="ChEBI" id="CHEBI:456216"/>
        <dbReference type="EC" id="2.7.4.22"/>
    </reaction>
</comment>
<comment type="activity regulation">
    <text evidence="1">Allosterically activated by GTP. Inhibited by UTP.</text>
</comment>
<comment type="pathway">
    <text evidence="1">Pyrimidine metabolism; CTP biosynthesis via de novo pathway; UDP from UMP (UMPK route): step 1/1.</text>
</comment>
<comment type="subunit">
    <text evidence="1">Homohexamer.</text>
</comment>
<comment type="subcellular location">
    <subcellularLocation>
        <location evidence="1">Cytoplasm</location>
    </subcellularLocation>
</comment>
<comment type="similarity">
    <text evidence="1">Belongs to the UMP kinase family.</text>
</comment>
<dbReference type="EC" id="2.7.4.22" evidence="1"/>
<dbReference type="EMBL" id="AE006470">
    <property type="protein sequence ID" value="AAM73000.1"/>
    <property type="molecule type" value="Genomic_DNA"/>
</dbReference>
<dbReference type="RefSeq" id="NP_662658.1">
    <property type="nucleotide sequence ID" value="NC_002932.3"/>
</dbReference>
<dbReference type="RefSeq" id="WP_010933439.1">
    <property type="nucleotide sequence ID" value="NC_002932.3"/>
</dbReference>
<dbReference type="SMR" id="P59003"/>
<dbReference type="STRING" id="194439.CT1779"/>
<dbReference type="EnsemblBacteria" id="AAM73000">
    <property type="protein sequence ID" value="AAM73000"/>
    <property type="gene ID" value="CT1779"/>
</dbReference>
<dbReference type="KEGG" id="cte:CT1779"/>
<dbReference type="PATRIC" id="fig|194439.7.peg.1613"/>
<dbReference type="eggNOG" id="COG0528">
    <property type="taxonomic scope" value="Bacteria"/>
</dbReference>
<dbReference type="HOGENOM" id="CLU_033861_0_0_10"/>
<dbReference type="OrthoDB" id="9807458at2"/>
<dbReference type="UniPathway" id="UPA00159">
    <property type="reaction ID" value="UER00275"/>
</dbReference>
<dbReference type="Proteomes" id="UP000001007">
    <property type="component" value="Chromosome"/>
</dbReference>
<dbReference type="GO" id="GO:0005737">
    <property type="term" value="C:cytoplasm"/>
    <property type="evidence" value="ECO:0007669"/>
    <property type="project" value="UniProtKB-SubCell"/>
</dbReference>
<dbReference type="GO" id="GO:0005524">
    <property type="term" value="F:ATP binding"/>
    <property type="evidence" value="ECO:0007669"/>
    <property type="project" value="UniProtKB-KW"/>
</dbReference>
<dbReference type="GO" id="GO:0033862">
    <property type="term" value="F:UMP kinase activity"/>
    <property type="evidence" value="ECO:0007669"/>
    <property type="project" value="UniProtKB-EC"/>
</dbReference>
<dbReference type="GO" id="GO:0044210">
    <property type="term" value="P:'de novo' CTP biosynthetic process"/>
    <property type="evidence" value="ECO:0007669"/>
    <property type="project" value="UniProtKB-UniRule"/>
</dbReference>
<dbReference type="GO" id="GO:0006225">
    <property type="term" value="P:UDP biosynthetic process"/>
    <property type="evidence" value="ECO:0007669"/>
    <property type="project" value="TreeGrafter"/>
</dbReference>
<dbReference type="CDD" id="cd04254">
    <property type="entry name" value="AAK_UMPK-PyrH-Ec"/>
    <property type="match status" value="1"/>
</dbReference>
<dbReference type="FunFam" id="3.40.1160.10:FF:000001">
    <property type="entry name" value="Uridylate kinase"/>
    <property type="match status" value="1"/>
</dbReference>
<dbReference type="Gene3D" id="3.40.1160.10">
    <property type="entry name" value="Acetylglutamate kinase-like"/>
    <property type="match status" value="1"/>
</dbReference>
<dbReference type="HAMAP" id="MF_01220_B">
    <property type="entry name" value="PyrH_B"/>
    <property type="match status" value="1"/>
</dbReference>
<dbReference type="InterPro" id="IPR036393">
    <property type="entry name" value="AceGlu_kinase-like_sf"/>
</dbReference>
<dbReference type="InterPro" id="IPR001048">
    <property type="entry name" value="Asp/Glu/Uridylate_kinase"/>
</dbReference>
<dbReference type="InterPro" id="IPR011817">
    <property type="entry name" value="Uridylate_kinase"/>
</dbReference>
<dbReference type="InterPro" id="IPR015963">
    <property type="entry name" value="Uridylate_kinase_bac"/>
</dbReference>
<dbReference type="NCBIfam" id="TIGR02075">
    <property type="entry name" value="pyrH_bact"/>
    <property type="match status" value="1"/>
</dbReference>
<dbReference type="PANTHER" id="PTHR42833">
    <property type="entry name" value="URIDYLATE KINASE"/>
    <property type="match status" value="1"/>
</dbReference>
<dbReference type="PANTHER" id="PTHR42833:SF4">
    <property type="entry name" value="URIDYLATE KINASE PUMPKIN, CHLOROPLASTIC"/>
    <property type="match status" value="1"/>
</dbReference>
<dbReference type="Pfam" id="PF00696">
    <property type="entry name" value="AA_kinase"/>
    <property type="match status" value="1"/>
</dbReference>
<dbReference type="PIRSF" id="PIRSF005650">
    <property type="entry name" value="Uridylate_kin"/>
    <property type="match status" value="1"/>
</dbReference>
<dbReference type="SUPFAM" id="SSF53633">
    <property type="entry name" value="Carbamate kinase-like"/>
    <property type="match status" value="1"/>
</dbReference>